<comment type="function">
    <text evidence="1">Component of the biogenesis of lysosome-related organelles complex-1 (BLOC-1), a complex involved in endosomal cargo sorting.</text>
</comment>
<comment type="subunit">
    <text evidence="1">Component of the biogenesis of lysosome-related organelles complex-1 (BLOC-1).</text>
</comment>
<comment type="subcellular location">
    <subcellularLocation>
        <location evidence="1">Endosome</location>
    </subcellularLocation>
</comment>
<comment type="similarity">
    <text evidence="3">Belongs to the SNAPIN family.</text>
</comment>
<dbReference type="EMBL" id="CU928171">
    <property type="protein sequence ID" value="CAR24963.1"/>
    <property type="molecule type" value="Genomic_DNA"/>
</dbReference>
<dbReference type="RefSeq" id="XP_002555400.1">
    <property type="nucleotide sequence ID" value="XM_002555354.1"/>
</dbReference>
<dbReference type="SMR" id="C5DMF2"/>
<dbReference type="FunCoup" id="C5DMF2">
    <property type="interactions" value="34"/>
</dbReference>
<dbReference type="STRING" id="559295.C5DMF2"/>
<dbReference type="GeneID" id="8293673"/>
<dbReference type="KEGG" id="lth:KLTH0G08382g"/>
<dbReference type="eggNOG" id="ENOG502S7PY">
    <property type="taxonomic scope" value="Eukaryota"/>
</dbReference>
<dbReference type="HOGENOM" id="CLU_178727_0_0_1"/>
<dbReference type="InParanoid" id="C5DMF2"/>
<dbReference type="OMA" id="IHPIELC"/>
<dbReference type="OrthoDB" id="4065244at2759"/>
<dbReference type="Proteomes" id="UP000002036">
    <property type="component" value="Chromosome G"/>
</dbReference>
<dbReference type="GO" id="GO:0005768">
    <property type="term" value="C:endosome"/>
    <property type="evidence" value="ECO:0007669"/>
    <property type="project" value="UniProtKB-SubCell"/>
</dbReference>
<accession>C5DMF2</accession>
<evidence type="ECO:0000250" key="1"/>
<evidence type="ECO:0000255" key="2"/>
<evidence type="ECO:0000305" key="3"/>
<gene>
    <name type="primary">SNN1</name>
    <name type="ordered locus">KLTH0G08382g</name>
</gene>
<protein>
    <recommendedName>
        <fullName>Biogenesis of lysosome-related organelles complex 1 subunit SNN1</fullName>
        <shortName>BLOC-1 subunit SNN1</shortName>
    </recommendedName>
    <alternativeName>
        <fullName>SNAPIN-like protein 1</fullName>
    </alternativeName>
</protein>
<sequence>MEPQEVAAAAGVHPIELCVYSILSNNLDGIYQSVNDLRESQALLVVRLKQIRNLLKEEQEYYNEEEGLGVERERLEELELRVEKLTQKYKKLLADCV</sequence>
<name>SNAPN_LACTC</name>
<proteinExistence type="inferred from homology"/>
<keyword id="KW-0175">Coiled coil</keyword>
<keyword id="KW-0967">Endosome</keyword>
<keyword id="KW-1185">Reference proteome</keyword>
<keyword id="KW-0813">Transport</keyword>
<reference key="1">
    <citation type="journal article" date="2009" name="Genome Res.">
        <title>Comparative genomics of protoploid Saccharomycetaceae.</title>
        <authorList>
            <consortium name="The Genolevures Consortium"/>
            <person name="Souciet J.-L."/>
            <person name="Dujon B."/>
            <person name="Gaillardin C."/>
            <person name="Johnston M."/>
            <person name="Baret P.V."/>
            <person name="Cliften P."/>
            <person name="Sherman D.J."/>
            <person name="Weissenbach J."/>
            <person name="Westhof E."/>
            <person name="Wincker P."/>
            <person name="Jubin C."/>
            <person name="Poulain J."/>
            <person name="Barbe V."/>
            <person name="Segurens B."/>
            <person name="Artiguenave F."/>
            <person name="Anthouard V."/>
            <person name="Vacherie B."/>
            <person name="Val M.-E."/>
            <person name="Fulton R.S."/>
            <person name="Minx P."/>
            <person name="Wilson R."/>
            <person name="Durrens P."/>
            <person name="Jean G."/>
            <person name="Marck C."/>
            <person name="Martin T."/>
            <person name="Nikolski M."/>
            <person name="Rolland T."/>
            <person name="Seret M.-L."/>
            <person name="Casaregola S."/>
            <person name="Despons L."/>
            <person name="Fairhead C."/>
            <person name="Fischer G."/>
            <person name="Lafontaine I."/>
            <person name="Leh V."/>
            <person name="Lemaire M."/>
            <person name="de Montigny J."/>
            <person name="Neuveglise C."/>
            <person name="Thierry A."/>
            <person name="Blanc-Lenfle I."/>
            <person name="Bleykasten C."/>
            <person name="Diffels J."/>
            <person name="Fritsch E."/>
            <person name="Frangeul L."/>
            <person name="Goeffon A."/>
            <person name="Jauniaux N."/>
            <person name="Kachouri-Lafond R."/>
            <person name="Payen C."/>
            <person name="Potier S."/>
            <person name="Pribylova L."/>
            <person name="Ozanne C."/>
            <person name="Richard G.-F."/>
            <person name="Sacerdot C."/>
            <person name="Straub M.-L."/>
            <person name="Talla E."/>
        </authorList>
    </citation>
    <scope>NUCLEOTIDE SEQUENCE [LARGE SCALE GENOMIC DNA]</scope>
    <source>
        <strain>ATCC 56472 / CBS 6340 / NRRL Y-8284</strain>
    </source>
</reference>
<organism>
    <name type="scientific">Lachancea thermotolerans (strain ATCC 56472 / CBS 6340 / NRRL Y-8284)</name>
    <name type="common">Yeast</name>
    <name type="synonym">Kluyveromyces thermotolerans</name>
    <dbReference type="NCBI Taxonomy" id="559295"/>
    <lineage>
        <taxon>Eukaryota</taxon>
        <taxon>Fungi</taxon>
        <taxon>Dikarya</taxon>
        <taxon>Ascomycota</taxon>
        <taxon>Saccharomycotina</taxon>
        <taxon>Saccharomycetes</taxon>
        <taxon>Saccharomycetales</taxon>
        <taxon>Saccharomycetaceae</taxon>
        <taxon>Lachancea</taxon>
    </lineage>
</organism>
<feature type="chain" id="PRO_0000410659" description="Biogenesis of lysosome-related organelles complex 1 subunit SNN1">
    <location>
        <begin position="1"/>
        <end position="97"/>
    </location>
</feature>
<feature type="coiled-coil region" evidence="2">
    <location>
        <begin position="45"/>
        <end position="97"/>
    </location>
</feature>